<name>UGPA_ASTPN</name>
<comment type="function">
    <text evidence="1">Plays a central role as a glucosyl donor in cellular metabolic pathways.</text>
</comment>
<comment type="catalytic activity">
    <reaction>
        <text>alpha-D-glucose 1-phosphate + UTP + H(+) = UDP-alpha-D-glucose + diphosphate</text>
        <dbReference type="Rhea" id="RHEA:19889"/>
        <dbReference type="ChEBI" id="CHEBI:15378"/>
        <dbReference type="ChEBI" id="CHEBI:33019"/>
        <dbReference type="ChEBI" id="CHEBI:46398"/>
        <dbReference type="ChEBI" id="CHEBI:58601"/>
        <dbReference type="ChEBI" id="CHEBI:58885"/>
        <dbReference type="EC" id="2.7.7.9"/>
    </reaction>
</comment>
<comment type="subcellular location">
    <subcellularLocation>
        <location evidence="1">Cytoplasm</location>
    </subcellularLocation>
</comment>
<comment type="similarity">
    <text evidence="4">Belongs to the UDPGP type 1 family.</text>
</comment>
<sequence>MATATATDRLSNLKSSVAGLNQISENEKSGFINLVARYLSGEAQHVEWSKIQTPTDEVVVPYDTLAPTPDGSLEIKNLLDKLVVLKLNGGLGTTMGCTGPKSVIEVRDGLTFLDLIVIQIENLNSKYGSNVPLLLMNSFNTHDDTQTIVEKYQNSNIEIHTFNQSQYPRLVVDDFLPLPSKGRTDKDGWYPPGHGSMFPSLSNSGKLDALISQGKEYVFVANSDNLGAIVDLKILNHLVAHKNEYCMEVTPKTLADVKGGTLISYEGRVQLLEIAQVPDEHVGEFKSIEKFKIFNTNNLWVNLKAIKRLVEADALKMEIIPNPKEVDGVKVLQLETAAGAAIRFFDKAIGINVPRSRFLPVKATSDLLLVQSDLYTVENGSVIRNKARTNPENPSIELGPEFKKVSNFLGRFKSIPSIVELDSLKVVGDVWFGTGVILKGKVSIVAKSGVKVEIPDGAVIANKEINGPKDL</sequence>
<protein>
    <recommendedName>
        <fullName>UTP--glucose-1-phosphate uridylyltransferase</fullName>
        <ecNumber>2.7.7.9</ecNumber>
    </recommendedName>
    <alternativeName>
        <fullName>UDP-glucose pyrophosphorylase</fullName>
        <shortName>UDPGP</shortName>
        <shortName>UGPase</shortName>
    </alternativeName>
</protein>
<dbReference type="EC" id="2.7.7.9"/>
<dbReference type="EMBL" id="AF281081">
    <property type="protein sequence ID" value="AAF86501.1"/>
    <property type="molecule type" value="mRNA"/>
</dbReference>
<dbReference type="SMR" id="Q9LKG7"/>
<dbReference type="GO" id="GO:0005737">
    <property type="term" value="C:cytoplasm"/>
    <property type="evidence" value="ECO:0007669"/>
    <property type="project" value="UniProtKB-SubCell"/>
</dbReference>
<dbReference type="GO" id="GO:0003983">
    <property type="term" value="F:UTP:glucose-1-phosphate uridylyltransferase activity"/>
    <property type="evidence" value="ECO:0007669"/>
    <property type="project" value="UniProtKB-EC"/>
</dbReference>
<dbReference type="GO" id="GO:0006011">
    <property type="term" value="P:UDP-alpha-D-glucose metabolic process"/>
    <property type="evidence" value="ECO:0007669"/>
    <property type="project" value="InterPro"/>
</dbReference>
<dbReference type="CDD" id="cd00897">
    <property type="entry name" value="UGPase_euk"/>
    <property type="match status" value="1"/>
</dbReference>
<dbReference type="FunFam" id="2.160.10.10:FF:000001">
    <property type="entry name" value="UTP--glucose-1-phosphate uridylyltransferase"/>
    <property type="match status" value="1"/>
</dbReference>
<dbReference type="FunFam" id="3.90.550.10:FF:000073">
    <property type="entry name" value="UTP--glucose-1-phosphate uridylyltransferase"/>
    <property type="match status" value="1"/>
</dbReference>
<dbReference type="Gene3D" id="2.160.10.10">
    <property type="entry name" value="Hexapeptide repeat proteins"/>
    <property type="match status" value="1"/>
</dbReference>
<dbReference type="Gene3D" id="3.90.550.10">
    <property type="entry name" value="Spore Coat Polysaccharide Biosynthesis Protein SpsA, Chain A"/>
    <property type="match status" value="1"/>
</dbReference>
<dbReference type="InterPro" id="IPR029044">
    <property type="entry name" value="Nucleotide-diphossugar_trans"/>
</dbReference>
<dbReference type="InterPro" id="IPR002618">
    <property type="entry name" value="UDPGP_fam"/>
</dbReference>
<dbReference type="InterPro" id="IPR016267">
    <property type="entry name" value="UDPGP_trans"/>
</dbReference>
<dbReference type="PANTHER" id="PTHR43511">
    <property type="match status" value="1"/>
</dbReference>
<dbReference type="Pfam" id="PF01704">
    <property type="entry name" value="UDPGP"/>
    <property type="match status" value="1"/>
</dbReference>
<dbReference type="PIRSF" id="PIRSF000806">
    <property type="entry name" value="UDPGP"/>
    <property type="match status" value="1"/>
</dbReference>
<dbReference type="SUPFAM" id="SSF53448">
    <property type="entry name" value="Nucleotide-diphospho-sugar transferases"/>
    <property type="match status" value="1"/>
</dbReference>
<reference key="1">
    <citation type="submission" date="2000-06" db="EMBL/GenBank/DDBJ databases">
        <title>cDNA cloning and expression in E.coli of UDP-glucose pyrophosphorylase of Astragalus membranaceus.</title>
        <authorList>
            <person name="Wu X.J."/>
            <person name="Liu D."/>
            <person name="Hu Z.B."/>
        </authorList>
    </citation>
    <scope>NUCLEOTIDE SEQUENCE [MRNA]</scope>
    <source>
        <tissue>Root</tissue>
    </source>
</reference>
<gene>
    <name type="primary">UGP</name>
</gene>
<organism>
    <name type="scientific">Astragalus penduliflorus</name>
    <name type="common">Mountain lentil</name>
    <dbReference type="NCBI Taxonomy" id="158323"/>
    <lineage>
        <taxon>Eukaryota</taxon>
        <taxon>Viridiplantae</taxon>
        <taxon>Streptophyta</taxon>
        <taxon>Embryophyta</taxon>
        <taxon>Tracheophyta</taxon>
        <taxon>Spermatophyta</taxon>
        <taxon>Magnoliopsida</taxon>
        <taxon>eudicotyledons</taxon>
        <taxon>Gunneridae</taxon>
        <taxon>Pentapetalae</taxon>
        <taxon>rosids</taxon>
        <taxon>fabids</taxon>
        <taxon>Fabales</taxon>
        <taxon>Fabaceae</taxon>
        <taxon>Papilionoideae</taxon>
        <taxon>50 kb inversion clade</taxon>
        <taxon>NPAAA clade</taxon>
        <taxon>Hologalegina</taxon>
        <taxon>IRL clade</taxon>
        <taxon>Galegeae</taxon>
        <taxon>Astragalus</taxon>
    </lineage>
</organism>
<evidence type="ECO:0000250" key="1"/>
<evidence type="ECO:0000250" key="2">
    <source>
        <dbReference type="UniProtKB" id="Q16851"/>
    </source>
</evidence>
<evidence type="ECO:0000250" key="3">
    <source>
        <dbReference type="UniProtKB" id="Q9M9P3"/>
    </source>
</evidence>
<evidence type="ECO:0000305" key="4"/>
<proteinExistence type="evidence at transcript level"/>
<feature type="chain" id="PRO_0000185758" description="UTP--glucose-1-phosphate uridylyltransferase">
    <location>
        <begin position="1"/>
        <end position="471"/>
    </location>
</feature>
<feature type="binding site" evidence="3">
    <location>
        <begin position="87"/>
        <end position="90"/>
    </location>
    <ligand>
        <name>UTP</name>
        <dbReference type="ChEBI" id="CHEBI:46398"/>
    </ligand>
</feature>
<feature type="binding site" evidence="2">
    <location>
        <begin position="89"/>
        <end position="90"/>
    </location>
    <ligand>
        <name>substrate</name>
    </ligand>
</feature>
<feature type="binding site" evidence="3">
    <location>
        <position position="101"/>
    </location>
    <ligand>
        <name>UTP</name>
        <dbReference type="ChEBI" id="CHEBI:46398"/>
    </ligand>
</feature>
<feature type="binding site" evidence="3">
    <location>
        <position position="164"/>
    </location>
    <ligand>
        <name>UTP</name>
        <dbReference type="ChEBI" id="CHEBI:46398"/>
    </ligand>
</feature>
<feature type="binding site" evidence="3">
    <location>
        <position position="193"/>
    </location>
    <ligand>
        <name>UTP</name>
        <dbReference type="ChEBI" id="CHEBI:46398"/>
    </ligand>
</feature>
<feature type="binding site" evidence="2">
    <location>
        <position position="194"/>
    </location>
    <ligand>
        <name>substrate</name>
    </ligand>
</feature>
<feature type="binding site" evidence="2">
    <location>
        <begin position="222"/>
        <end position="224"/>
    </location>
    <ligand>
        <name>substrate</name>
    </ligand>
</feature>
<feature type="binding site" evidence="3">
    <location>
        <position position="224"/>
    </location>
    <ligand>
        <name>UTP</name>
        <dbReference type="ChEBI" id="CHEBI:46398"/>
    </ligand>
</feature>
<feature type="binding site" evidence="3">
    <location>
        <position position="362"/>
    </location>
    <ligand>
        <name>UTP</name>
        <dbReference type="ChEBI" id="CHEBI:46398"/>
    </ligand>
</feature>
<keyword id="KW-0963">Cytoplasm</keyword>
<keyword id="KW-0548">Nucleotidyltransferase</keyword>
<keyword id="KW-0808">Transferase</keyword>
<accession>Q9LKG7</accession>